<reference key="1">
    <citation type="journal article" date="2006" name="PLoS Biol.">
        <title>Macronuclear genome sequence of the ciliate Tetrahymena thermophila, a model eukaryote.</title>
        <authorList>
            <person name="Eisen J.A."/>
            <person name="Coyne R.S."/>
            <person name="Wu M."/>
            <person name="Wu D."/>
            <person name="Thiagarajan M."/>
            <person name="Wortman J.R."/>
            <person name="Badger J.H."/>
            <person name="Ren Q."/>
            <person name="Amedeo P."/>
            <person name="Jones K.M."/>
            <person name="Tallon L.J."/>
            <person name="Delcher A.L."/>
            <person name="Salzberg S.L."/>
            <person name="Silva J.C."/>
            <person name="Haas B.J."/>
            <person name="Majoros W.H."/>
            <person name="Farzad M."/>
            <person name="Carlton J.M."/>
            <person name="Smith R.K. Jr."/>
            <person name="Garg J."/>
            <person name="Pearlman R.E."/>
            <person name="Karrer K.M."/>
            <person name="Sun L."/>
            <person name="Manning G."/>
            <person name="Elde N.C."/>
            <person name="Turkewitz A.P."/>
            <person name="Asai D.J."/>
            <person name="Wilkes D.E."/>
            <person name="Wang Y."/>
            <person name="Cai H."/>
            <person name="Collins K."/>
            <person name="Stewart B.A."/>
            <person name="Lee S.R."/>
            <person name="Wilamowska K."/>
            <person name="Weinberg Z."/>
            <person name="Ruzzo W.L."/>
            <person name="Wloga D."/>
            <person name="Gaertig J."/>
            <person name="Frankel J."/>
            <person name="Tsao C.-C."/>
            <person name="Gorovsky M.A."/>
            <person name="Keeling P.J."/>
            <person name="Waller R.F."/>
            <person name="Patron N.J."/>
            <person name="Cherry J.M."/>
            <person name="Stover N.A."/>
            <person name="Krieger C.J."/>
            <person name="del Toro C."/>
            <person name="Ryder H.F."/>
            <person name="Williamson S.C."/>
            <person name="Barbeau R.A."/>
            <person name="Hamilton E.P."/>
            <person name="Orias E."/>
        </authorList>
    </citation>
    <scope>NUCLEOTIDE SEQUENCE [LARGE SCALE GENOMIC DNA]</scope>
    <source>
        <strain>SB210</strain>
    </source>
</reference>
<reference key="2">
    <citation type="journal article" date="1991" name="Biochim. Biophys. Acta">
        <title>Purification and some properties of the squalene-tetrahymanol cyclase from Tetrahymena thermophila.</title>
        <authorList>
            <person name="Saar J."/>
            <person name="Kader J.C."/>
            <person name="Poralla K."/>
            <person name="Ourisson G."/>
        </authorList>
    </citation>
    <scope>FUNCTION</scope>
    <scope>SUBCELLULAR LOCATION</scope>
    <scope>CATALYTIC ACTIVITY</scope>
    <scope>BIOPHYSICOCHEMICAL PROPERTIES</scope>
    <scope>ACTIVITY REGULATION</scope>
</reference>
<reference key="3">
    <citation type="journal article" date="2020" name="Appl. Environ. Microbiol.">
        <title>Squalene-tetrahymanol cyclase expression enables sterol-independent growth of Saccharomyces cerevisiae.</title>
        <authorList>
            <person name="Wiersma S.J."/>
            <person name="Mooiman C."/>
            <person name="Giera M."/>
            <person name="Pronk J.T."/>
        </authorList>
    </citation>
    <scope>FUNCTION</scope>
    <scope>CATALYTIC ACTIVITY</scope>
    <scope>BIOTECHNOLOGY</scope>
</reference>
<reference key="4">
    <citation type="journal article" date="2021" name="Metab. Eng.">
        <title>Engineering the thermotolerant industrial yeast Kluyveromyces marxianus for anaerobic growth.</title>
        <authorList>
            <person name="Dekker W.J.C."/>
            <person name="Ortiz-Merino R.A."/>
            <person name="Kaljouw A."/>
            <person name="Battjes J."/>
            <person name="Wiering F.W."/>
            <person name="Mooiman C."/>
            <person name="Torre P."/>
            <person name="Pronk J.T."/>
        </authorList>
    </citation>
    <scope>FUNCTION</scope>
    <scope>BIOTECHNOLOGY</scope>
</reference>
<dbReference type="EC" id="4.2.1.123" evidence="4 5"/>
<dbReference type="EMBL" id="GG662290">
    <property type="protein sequence ID" value="EAS06451.2"/>
    <property type="molecule type" value="Genomic_DNA"/>
</dbReference>
<dbReference type="RefSeq" id="XP_001026696.2">
    <property type="nucleotide sequence ID" value="XM_001026696.2"/>
</dbReference>
<dbReference type="SMR" id="Q24FB1"/>
<dbReference type="STRING" id="312017.Q24FB1"/>
<dbReference type="GlyCosmos" id="Q24FB1">
    <property type="glycosylation" value="4 sites, No reported glycans"/>
</dbReference>
<dbReference type="EnsemblProtists" id="EAS06451">
    <property type="protein sequence ID" value="EAS06451"/>
    <property type="gene ID" value="TTHERM_01008630"/>
</dbReference>
<dbReference type="GeneID" id="7843402"/>
<dbReference type="KEGG" id="tet:TTHERM_01008630"/>
<dbReference type="eggNOG" id="KOG0497">
    <property type="taxonomic scope" value="Eukaryota"/>
</dbReference>
<dbReference type="HOGENOM" id="CLU_262960_0_0_1"/>
<dbReference type="InParanoid" id="Q24FB1"/>
<dbReference type="OrthoDB" id="21502at2759"/>
<dbReference type="BRENDA" id="4.2.1.123">
    <property type="organism ID" value="6245"/>
</dbReference>
<dbReference type="Proteomes" id="UP000009168">
    <property type="component" value="Unassembled WGS sequence"/>
</dbReference>
<dbReference type="GO" id="GO:0005811">
    <property type="term" value="C:lipid droplet"/>
    <property type="evidence" value="ECO:0007669"/>
    <property type="project" value="InterPro"/>
</dbReference>
<dbReference type="GO" id="GO:0016020">
    <property type="term" value="C:membrane"/>
    <property type="evidence" value="ECO:0007669"/>
    <property type="project" value="UniProtKB-SubCell"/>
</dbReference>
<dbReference type="GO" id="GO:0016866">
    <property type="term" value="F:intramolecular transferase activity"/>
    <property type="evidence" value="ECO:0007669"/>
    <property type="project" value="InterPro"/>
</dbReference>
<dbReference type="GO" id="GO:0016829">
    <property type="term" value="F:lyase activity"/>
    <property type="evidence" value="ECO:0007669"/>
    <property type="project" value="UniProtKB-KW"/>
</dbReference>
<dbReference type="GO" id="GO:0016126">
    <property type="term" value="P:sterol biosynthetic process"/>
    <property type="evidence" value="ECO:0007669"/>
    <property type="project" value="UniProtKB-KW"/>
</dbReference>
<dbReference type="GO" id="GO:0016104">
    <property type="term" value="P:triterpenoid biosynthetic process"/>
    <property type="evidence" value="ECO:0007669"/>
    <property type="project" value="InterPro"/>
</dbReference>
<dbReference type="Gene3D" id="1.50.10.20">
    <property type="match status" value="2"/>
</dbReference>
<dbReference type="InterPro" id="IPR032696">
    <property type="entry name" value="SQ_cyclase_C"/>
</dbReference>
<dbReference type="InterPro" id="IPR032697">
    <property type="entry name" value="SQ_cyclase_N"/>
</dbReference>
<dbReference type="InterPro" id="IPR018333">
    <property type="entry name" value="Squalene_cyclase"/>
</dbReference>
<dbReference type="InterPro" id="IPR008930">
    <property type="entry name" value="Terpenoid_cyclase/PrenylTrfase"/>
</dbReference>
<dbReference type="InterPro" id="IPR026370">
    <property type="entry name" value="Tetrahymanol_synth_THC1"/>
</dbReference>
<dbReference type="NCBIfam" id="TIGR04277">
    <property type="entry name" value="squa_tetra_cyc"/>
    <property type="match status" value="1"/>
</dbReference>
<dbReference type="PANTHER" id="PTHR11764">
    <property type="entry name" value="TERPENE CYCLASE/MUTASE FAMILY MEMBER"/>
    <property type="match status" value="1"/>
</dbReference>
<dbReference type="PANTHER" id="PTHR11764:SF82">
    <property type="entry name" value="TERPENE CYCLASE_MUTASE FAMILY MEMBER"/>
    <property type="match status" value="1"/>
</dbReference>
<dbReference type="Pfam" id="PF13243">
    <property type="entry name" value="SQHop_cyclase_C"/>
    <property type="match status" value="1"/>
</dbReference>
<dbReference type="Pfam" id="PF13249">
    <property type="entry name" value="SQHop_cyclase_N"/>
    <property type="match status" value="1"/>
</dbReference>
<dbReference type="SUPFAM" id="SSF48239">
    <property type="entry name" value="Terpenoid cyclases/Protein prenyltransferases"/>
    <property type="match status" value="2"/>
</dbReference>
<protein>
    <recommendedName>
        <fullName evidence="7">Squalene-tetrahymanol cyclase THC1</fullName>
        <shortName evidence="8">STC</shortName>
        <ecNumber evidence="4 5">4.2.1.123</ecNumber>
    </recommendedName>
</protein>
<name>THC1_TETTS</name>
<accession>Q24FB1</accession>
<organism>
    <name type="scientific">Tetrahymena thermophila (strain SB210)</name>
    <dbReference type="NCBI Taxonomy" id="312017"/>
    <lineage>
        <taxon>Eukaryota</taxon>
        <taxon>Sar</taxon>
        <taxon>Alveolata</taxon>
        <taxon>Ciliophora</taxon>
        <taxon>Intramacronucleata</taxon>
        <taxon>Oligohymenophorea</taxon>
        <taxon>Hymenostomatida</taxon>
        <taxon>Tetrahymenina</taxon>
        <taxon>Tetrahymenidae</taxon>
        <taxon>Tetrahymena</taxon>
    </lineage>
</organism>
<feature type="signal peptide" evidence="2">
    <location>
        <begin position="1"/>
        <end position="20"/>
    </location>
</feature>
<feature type="chain" id="PRO_5004202317" description="Squalene-tetrahymanol cyclase THC1">
    <location>
        <begin position="21"/>
        <end position="655"/>
    </location>
</feature>
<feature type="repeat" description="PFTB 1" evidence="2">
    <location>
        <begin position="393"/>
        <end position="435"/>
    </location>
</feature>
<feature type="repeat" description="PFTB 2" evidence="2">
    <location>
        <begin position="515"/>
        <end position="562"/>
    </location>
</feature>
<feature type="active site" description="Proton donor" evidence="1">
    <location>
        <position position="373"/>
    </location>
</feature>
<feature type="site" description="Transition state stabilizer" evidence="1">
    <location>
        <position position="323"/>
    </location>
</feature>
<feature type="site" description="Transition state stabilizer" evidence="1">
    <location>
        <position position="488"/>
    </location>
</feature>
<feature type="glycosylation site" description="N-linked (GlcNAc...) asparagine" evidence="3">
    <location>
        <position position="23"/>
    </location>
</feature>
<feature type="glycosylation site" description="N-linked (GlcNAc...) asparagine" evidence="3">
    <location>
        <position position="44"/>
    </location>
</feature>
<feature type="glycosylation site" description="N-linked (GlcNAc...) asparagine" evidence="3">
    <location>
        <position position="69"/>
    </location>
</feature>
<feature type="glycosylation site" description="N-linked (GlcNAc...) asparagine" evidence="3">
    <location>
        <position position="77"/>
    </location>
</feature>
<comment type="function">
    <text evidence="4 5 6">Squalene cyclase that catalyzes the oxygen-independent cyclization of squalene into tetrahymanol, a triterpenoid sterol with five cyclohexyl rings that is involved in membrane integrity, permeability and fluidity.</text>
</comment>
<comment type="catalytic activity">
    <reaction evidence="4 5">
        <text>tetrahymanol = squalene + H2O</text>
        <dbReference type="Rhea" id="RHEA:30675"/>
        <dbReference type="ChEBI" id="CHEBI:9493"/>
        <dbReference type="ChEBI" id="CHEBI:15377"/>
        <dbReference type="ChEBI" id="CHEBI:15440"/>
        <dbReference type="EC" id="4.2.1.123"/>
    </reaction>
    <physiologicalReaction direction="right-to-left" evidence="4 5">
        <dbReference type="Rhea" id="RHEA:30677"/>
    </physiologicalReaction>
</comment>
<comment type="activity regulation">
    <text evidence="4">2,3-iminosqualene and N,N-dimethyldodecylamine~N-oxlde are effective inhibitors with IC(50) values of 50 and 30 nM, respectively.</text>
</comment>
<comment type="biophysicochemical properties">
    <kinetics>
        <KM evidence="4">18 uM for sqna!ene</KM>
    </kinetics>
    <phDependence>
        <text evidence="4">Optimum pH is 7.0.</text>
    </phDependence>
    <temperatureDependence>
        <text evidence="4">Optimum temperature is 30 degrees Celsius.</text>
    </temperatureDependence>
</comment>
<comment type="subcellular location">
    <subcellularLocation>
        <location evidence="4">Membrane</location>
        <topology evidence="4">Peripheral membrane protein</topology>
    </subcellularLocation>
</comment>
<comment type="biotechnology">
    <text evidence="5 6">Expression of THC1 in Saccharomyces cerevisiae enables to eliminate anaerobic sterol requirements and provides valuable information for the design and construction of robust, sterol-independent yeast strains for application in anaerobic industrial processes.</text>
</comment>
<comment type="similarity">
    <text evidence="9">Belongs to the terpene cyclase/mutase family.</text>
</comment>
<sequence length="655" mass="76021">MKKILIGLIIGLFLFSSVNASVNLTEVQNAISIQQGINWAEVHNNTWYYPPYLGEMFISEYYFELLVLNWTHKSAFNATYFTERLLQTQFEDGSWEQVREQNLETGQLDATVFNYWYLKSINNNPKIEAALQKARKWIVAQGGIEATQTMTKFKLAAFGQYSWEDLWYVPLFIFKQNGIFKYTYVKDIVAQWVYPHLTALAYLRYQRTVFNVPVADLRELWINYPKNGIKISPREYSTLNPDSDLLILMDEIFKLKQPLGSFGAYTISTLLTLMSFKDFQSKHPHLYQNEIQKAYEDGYYFVEFNYFNFREAYHGSLDDGRWWDTILISWAMLESGQDKERIFPIVQNMVKEGLQPKKGIGYGYDFEYAPDTDDTGLLLVVMSYYKEAFQKQIPETIEWLFSMQNDDGGYPAFDKGKNEDNLLFKFAFNMAGIANSAEIFDPSCPDITGHIMEGLGEFGYQANHPQIQNMIKYQRKTQNKWGSWQARWGVNYIMAVGAVVPGLARVNYDLNEQWVQNSINYLLNKQNKDGGFGECVLSYNDPEKWNGIGKSTVTQTSWGLLALLEVYNQNEQIKHAADRAAQYLLDQFKRDDNTFYDHSTIGTGHRGLLYLQYPSYAQSFPLVALNRYQKISQGQYHFSKNLYNGNGEPVQKQNI</sequence>
<evidence type="ECO:0000250" key="1">
    <source>
        <dbReference type="UniProtKB" id="P48449"/>
    </source>
</evidence>
<evidence type="ECO:0000255" key="2"/>
<evidence type="ECO:0000255" key="3">
    <source>
        <dbReference type="PROSITE-ProRule" id="PRU00498"/>
    </source>
</evidence>
<evidence type="ECO:0000269" key="4">
    <source>
    </source>
</evidence>
<evidence type="ECO:0000269" key="5">
    <source>
    </source>
</evidence>
<evidence type="ECO:0000269" key="6">
    <source>
    </source>
</evidence>
<evidence type="ECO:0000303" key="7">
    <source>
    </source>
</evidence>
<evidence type="ECO:0000303" key="8">
    <source>
    </source>
</evidence>
<evidence type="ECO:0000305" key="9"/>
<keyword id="KW-0325">Glycoprotein</keyword>
<keyword id="KW-0444">Lipid biosynthesis</keyword>
<keyword id="KW-0443">Lipid metabolism</keyword>
<keyword id="KW-0456">Lyase</keyword>
<keyword id="KW-0472">Membrane</keyword>
<keyword id="KW-1185">Reference proteome</keyword>
<keyword id="KW-0677">Repeat</keyword>
<keyword id="KW-0732">Signal</keyword>
<keyword id="KW-0752">Steroid biosynthesis</keyword>
<keyword id="KW-0753">Steroid metabolism</keyword>
<keyword id="KW-0756">Sterol biosynthesis</keyword>
<keyword id="KW-1207">Sterol metabolism</keyword>
<gene>
    <name evidence="8" type="primary">THC1</name>
    <name type="ORF">TTHERM_01008630</name>
</gene>
<proteinExistence type="evidence at protein level"/>